<dbReference type="EMBL" id="CP001233">
    <property type="protein sequence ID" value="ACP04949.1"/>
    <property type="molecule type" value="Genomic_DNA"/>
</dbReference>
<dbReference type="RefSeq" id="WP_000801221.1">
    <property type="nucleotide sequence ID" value="NC_012578.1"/>
</dbReference>
<dbReference type="SMR" id="C3LSS3"/>
<dbReference type="KEGG" id="vcm:VCM66_0626"/>
<dbReference type="HOGENOM" id="CLU_086669_0_0_6"/>
<dbReference type="Proteomes" id="UP000001217">
    <property type="component" value="Chromosome I"/>
</dbReference>
<dbReference type="GO" id="GO:0005737">
    <property type="term" value="C:cytoplasm"/>
    <property type="evidence" value="ECO:0007669"/>
    <property type="project" value="UniProtKB-SubCell"/>
</dbReference>
<dbReference type="GO" id="GO:0003677">
    <property type="term" value="F:DNA binding"/>
    <property type="evidence" value="ECO:0007669"/>
    <property type="project" value="InterPro"/>
</dbReference>
<dbReference type="GO" id="GO:0004519">
    <property type="term" value="F:endonuclease activity"/>
    <property type="evidence" value="ECO:0007669"/>
    <property type="project" value="UniProtKB-UniRule"/>
</dbReference>
<dbReference type="GO" id="GO:0006304">
    <property type="term" value="P:DNA modification"/>
    <property type="evidence" value="ECO:0007669"/>
    <property type="project" value="InterPro"/>
</dbReference>
<dbReference type="GO" id="GO:0006298">
    <property type="term" value="P:mismatch repair"/>
    <property type="evidence" value="ECO:0007669"/>
    <property type="project" value="UniProtKB-UniRule"/>
</dbReference>
<dbReference type="CDD" id="cd00583">
    <property type="entry name" value="MutH-like"/>
    <property type="match status" value="1"/>
</dbReference>
<dbReference type="FunFam" id="3.40.600.10:FF:000001">
    <property type="entry name" value="DNA mismatch repair protein MutH"/>
    <property type="match status" value="1"/>
</dbReference>
<dbReference type="Gene3D" id="3.40.600.10">
    <property type="entry name" value="DNA mismatch repair MutH/Restriction endonuclease, type II"/>
    <property type="match status" value="1"/>
</dbReference>
<dbReference type="HAMAP" id="MF_00759">
    <property type="entry name" value="MutH"/>
    <property type="match status" value="1"/>
</dbReference>
<dbReference type="InterPro" id="IPR004230">
    <property type="entry name" value="DNA_mismatch_repair_MutH"/>
</dbReference>
<dbReference type="InterPro" id="IPR011337">
    <property type="entry name" value="DNA_rep_MutH/RE_typeII_Sau3AI"/>
</dbReference>
<dbReference type="InterPro" id="IPR037057">
    <property type="entry name" value="DNA_rep_MutH/T2_RE_sf"/>
</dbReference>
<dbReference type="InterPro" id="IPR011335">
    <property type="entry name" value="Restrct_endonuc-II-like"/>
</dbReference>
<dbReference type="NCBIfam" id="TIGR02248">
    <property type="entry name" value="mutH_TIGR"/>
    <property type="match status" value="1"/>
</dbReference>
<dbReference type="NCBIfam" id="NF003458">
    <property type="entry name" value="PRK05070.1"/>
    <property type="match status" value="1"/>
</dbReference>
<dbReference type="Pfam" id="PF02976">
    <property type="entry name" value="MutH"/>
    <property type="match status" value="1"/>
</dbReference>
<dbReference type="SMART" id="SM00927">
    <property type="entry name" value="MutH"/>
    <property type="match status" value="1"/>
</dbReference>
<dbReference type="SUPFAM" id="SSF52980">
    <property type="entry name" value="Restriction endonuclease-like"/>
    <property type="match status" value="1"/>
</dbReference>
<comment type="function">
    <text evidence="1">Sequence-specific endonuclease that cleaves unmethylated GATC sequences. It is involved in DNA mismatch repair.</text>
</comment>
<comment type="subcellular location">
    <subcellularLocation>
        <location evidence="1">Cytoplasm</location>
    </subcellularLocation>
</comment>
<comment type="similarity">
    <text evidence="1">Belongs to the MutH family.</text>
</comment>
<keyword id="KW-0963">Cytoplasm</keyword>
<keyword id="KW-0227">DNA damage</keyword>
<keyword id="KW-0234">DNA repair</keyword>
<keyword id="KW-0255">Endonuclease</keyword>
<keyword id="KW-0378">Hydrolase</keyword>
<keyword id="KW-0540">Nuclease</keyword>
<evidence type="ECO:0000255" key="1">
    <source>
        <dbReference type="HAMAP-Rule" id="MF_00759"/>
    </source>
</evidence>
<sequence length="221" mass="24584">MKPAPTTQQELLTRAQQIAGLSFAELADEAGMTVPPDLRKDKGWVGQLLEWHLGATAGSRPQQDFEHLGIELKSIPISYTGKPLETTFVCVAPLTGVHGLTWEQSHVRNKLSKVLWIPVQGEREIPLAERCVGSPLLWSPSPEEEAQLKADWEELMEWIVLGKVAQITAKHGEVLQLRPKAANGRALTEAYGANGRPIKALPRGFYLRTQFTAQILQRYYA</sequence>
<organism>
    <name type="scientific">Vibrio cholerae serotype O1 (strain M66-2)</name>
    <dbReference type="NCBI Taxonomy" id="579112"/>
    <lineage>
        <taxon>Bacteria</taxon>
        <taxon>Pseudomonadati</taxon>
        <taxon>Pseudomonadota</taxon>
        <taxon>Gammaproteobacteria</taxon>
        <taxon>Vibrionales</taxon>
        <taxon>Vibrionaceae</taxon>
        <taxon>Vibrio</taxon>
    </lineage>
</organism>
<protein>
    <recommendedName>
        <fullName evidence="1">DNA mismatch repair protein MutH</fullName>
    </recommendedName>
    <alternativeName>
        <fullName evidence="1">Methyl-directed mismatch repair protein</fullName>
    </alternativeName>
</protein>
<accession>C3LSS3</accession>
<feature type="chain" id="PRO_1000148404" description="DNA mismatch repair protein MutH">
    <location>
        <begin position="1"/>
        <end position="221"/>
    </location>
</feature>
<gene>
    <name evidence="1" type="primary">mutH</name>
    <name type="ordered locus">VCM66_0626</name>
</gene>
<proteinExistence type="inferred from homology"/>
<name>MUTH_VIBCM</name>
<reference key="1">
    <citation type="journal article" date="2008" name="PLoS ONE">
        <title>A recalibrated molecular clock and independent origins for the cholera pandemic clones.</title>
        <authorList>
            <person name="Feng L."/>
            <person name="Reeves P.R."/>
            <person name="Lan R."/>
            <person name="Ren Y."/>
            <person name="Gao C."/>
            <person name="Zhou Z."/>
            <person name="Ren Y."/>
            <person name="Cheng J."/>
            <person name="Wang W."/>
            <person name="Wang J."/>
            <person name="Qian W."/>
            <person name="Li D."/>
            <person name="Wang L."/>
        </authorList>
    </citation>
    <scope>NUCLEOTIDE SEQUENCE [LARGE SCALE GENOMIC DNA]</scope>
    <source>
        <strain>M66-2</strain>
    </source>
</reference>